<accession>A0A5B8Z260</accession>
<keyword id="KW-0051">Antiviral defense</keyword>
<keyword id="KW-0963">Cytoplasm</keyword>
<keyword id="KW-0378">Hydrolase</keyword>
<keyword id="KW-0520">NAD</keyword>
<keyword id="KW-1185">Reference proteome</keyword>
<name>THSB2_CYTDA</name>
<dbReference type="EC" id="3.2.2.-" evidence="2"/>
<dbReference type="EMBL" id="CP042593">
    <property type="protein sequence ID" value="QED46887.1"/>
    <property type="molecule type" value="Genomic_DNA"/>
</dbReference>
<dbReference type="RefSeq" id="WP_057775113.1">
    <property type="nucleotide sequence ID" value="NZ_CP042593.1"/>
</dbReference>
<dbReference type="SMR" id="A0A5B8Z260"/>
<dbReference type="STRING" id="1742359.GCA_001439625_04133"/>
<dbReference type="KEGG" id="bda:FSZ17_06170"/>
<dbReference type="OrthoDB" id="9810385at2"/>
<dbReference type="Proteomes" id="UP000321555">
    <property type="component" value="Chromosome"/>
</dbReference>
<dbReference type="GO" id="GO:0005737">
    <property type="term" value="C:cytoplasm"/>
    <property type="evidence" value="ECO:0007669"/>
    <property type="project" value="UniProtKB-SubCell"/>
</dbReference>
<dbReference type="GO" id="GO:0016787">
    <property type="term" value="F:hydrolase activity"/>
    <property type="evidence" value="ECO:0007669"/>
    <property type="project" value="UniProtKB-KW"/>
</dbReference>
<dbReference type="GO" id="GO:0051607">
    <property type="term" value="P:defense response to virus"/>
    <property type="evidence" value="ECO:0007669"/>
    <property type="project" value="UniProtKB-KW"/>
</dbReference>
<dbReference type="GO" id="GO:0007165">
    <property type="term" value="P:signal transduction"/>
    <property type="evidence" value="ECO:0007669"/>
    <property type="project" value="InterPro"/>
</dbReference>
<dbReference type="Gene3D" id="3.40.50.10140">
    <property type="entry name" value="Toll/interleukin-1 receptor homology (TIR) domain"/>
    <property type="match status" value="1"/>
</dbReference>
<dbReference type="InterPro" id="IPR015032">
    <property type="entry name" value="ThsB__TIR-like_domain"/>
</dbReference>
<dbReference type="InterPro" id="IPR000157">
    <property type="entry name" value="TIR_dom"/>
</dbReference>
<dbReference type="InterPro" id="IPR035897">
    <property type="entry name" value="Toll_tir_struct_dom_sf"/>
</dbReference>
<dbReference type="Pfam" id="PF08937">
    <property type="entry name" value="ThsB_TIR"/>
    <property type="match status" value="1"/>
</dbReference>
<dbReference type="SUPFAM" id="SSF52200">
    <property type="entry name" value="Toll/Interleukin receptor TIR domain"/>
    <property type="match status" value="1"/>
</dbReference>
<dbReference type="PROSITE" id="PS50104">
    <property type="entry name" value="TIR"/>
    <property type="match status" value="1"/>
</dbReference>
<reference evidence="8" key="1">
    <citation type="submission" date="2019-08" db="EMBL/GenBank/DDBJ databases">
        <authorList>
            <person name="Zheng X."/>
        </authorList>
    </citation>
    <scope>NUCLEOTIDE SEQUENCE [LARGE SCALE GENOMIC DNA]</scope>
    <source>
        <strain>KCTC 43120 / FJAT-25496</strain>
    </source>
</reference>
<reference key="2">
    <citation type="journal article" date="2021" name="Nature">
        <title>Antiviral activity of bacterial TIR domains via immune signalling molecules.</title>
        <authorList>
            <person name="Ofir G."/>
            <person name="Herbst E."/>
            <person name="Baroz M."/>
            <person name="Cohen D."/>
            <person name="Millman A."/>
            <person name="Doron S."/>
            <person name="Tal N."/>
            <person name="Malheiro D.B.A."/>
            <person name="Malitsky S."/>
            <person name="Amitai G."/>
            <person name="Sorek R."/>
        </authorList>
    </citation>
    <scope>FUNCTION IN ANTIVIRAL DEFENSE</scope>
    <scope>FUNCTION</scope>
    <scope>ACTIVITY REGULATION</scope>
    <scope>EXPRESSION IN B.SUBTILIS</scope>
    <source>
        <strain>KCTC 43120 / FJAT-25496</strain>
    </source>
</reference>
<evidence type="ECO:0000250" key="1">
    <source>
        <dbReference type="UniProtKB" id="A0A009IHW8"/>
    </source>
</evidence>
<evidence type="ECO:0000250" key="2">
    <source>
        <dbReference type="UniProtKB" id="J8CSK2"/>
    </source>
</evidence>
<evidence type="ECO:0000255" key="3">
    <source>
        <dbReference type="PROSITE-ProRule" id="PRU00204"/>
    </source>
</evidence>
<evidence type="ECO:0000269" key="4">
    <source>
    </source>
</evidence>
<evidence type="ECO:0000303" key="5">
    <source>
    </source>
</evidence>
<evidence type="ECO:0000305" key="6"/>
<evidence type="ECO:0000305" key="7">
    <source>
    </source>
</evidence>
<evidence type="ECO:0000312" key="8">
    <source>
        <dbReference type="EMBL" id="QED46887.1"/>
    </source>
</evidence>
<protein>
    <recommendedName>
        <fullName evidence="6">Putative cyclic ADP-D-ribose synthase TIR2</fullName>
        <shortName evidence="6">Putative cADPR synthase TIR2</shortName>
        <ecNumber evidence="2">3.2.2.-</ecNumber>
    </recommendedName>
    <alternativeName>
        <fullName evidence="5">Thoeris protein TIR2</fullName>
    </alternativeName>
</protein>
<proteinExistence type="evidence at protein level"/>
<comment type="function">
    <text evidence="2 4">One of 2 TIR-like protein components of the Thoeris antiviral defense system, composed of ThsA, TIR1 (thsB1) and TIR2 (thsB2). Phage infection activates this protein; by 70 minutes post-infection with phage SPO1, TIR2 generates a signal molecule that in turn activates the NAD(+) hydrolase activity of ThsA (tested with B.cereus). The signal is similar to cyclic ADP-D-ribose, but how it differs is unknown. Expression of Thoeris in B.subtilis (strain BEST7003) confers resistance to phages phi29, phi3T, SPBeta, SBSphi11, SBSphi13, SBSphiJ, SPO1 and SPR but not SBSphiC. The TIR paralogs confer resistance to different phages; this subunit confers resistance to phi3T, SPBeta, SBSphi13, SBSphiJ, SPO1 and SPR but not phi29, SBSphi11 or SBSphiC. There is overlap in the phage range for this system, both TIR1 and TIR2 are activated by SBSphi13, SBSphiJ, SPO1 and SPR. Probably hydrolyzes NAD(+) to make a cyclic ADP-D-ribose (cADPR) signaling molecule; might make 3'cADPR (By similarity).</text>
</comment>
<comment type="activity regulation">
    <text evidence="7">Activated upon phage infection.</text>
</comment>
<comment type="subunit">
    <text evidence="1">Homodimer.</text>
</comment>
<comment type="subcellular location">
    <subcellularLocation>
        <location evidence="6">Cytoplasm</location>
    </subcellularLocation>
</comment>
<organism>
    <name type="scientific">Cytobacillus dafuensis</name>
    <name type="common">Bacillus dafuensis</name>
    <dbReference type="NCBI Taxonomy" id="1742359"/>
    <lineage>
        <taxon>Bacteria</taxon>
        <taxon>Bacillati</taxon>
        <taxon>Bacillota</taxon>
        <taxon>Bacilli</taxon>
        <taxon>Bacillales</taxon>
        <taxon>Bacillaceae</taxon>
        <taxon>Cytobacillus</taxon>
    </lineage>
</organism>
<feature type="chain" id="PRO_0000456262" description="Putative cyclic ADP-D-ribose synthase TIR2">
    <location>
        <begin position="1"/>
        <end position="379"/>
    </location>
</feature>
<feature type="domain" description="TIR" evidence="3">
    <location>
        <begin position="254"/>
        <end position="379"/>
    </location>
</feature>
<feature type="active site" evidence="3">
    <location>
        <position position="335"/>
    </location>
</feature>
<sequence length="379" mass="45088">MPGVAKRKYVGETMRINKNLSQVLRRLSDVLPYNYNAETLLELFQQLYPHEWRELNQRFDQYKEKDEFLLKKGKKIRYKPNPPKEHFFKLPIVKNILSKGRIAKHNANFDELAYQERFAKFKAKRENAIRSRNEKIAKANELIQNVEPLFIDTFIAAYHKRGISFDEKMEIFKELQKYKSKKTAEFFYKLSESERNNQIRNMAFKHLQVTGNYVKLRKNFNGKKKEYMTESSEFFMTPLDLLKRIESNNVQNKKVYDVFISHSYKDSSVIKKIIKAFNKLSISIYCDWTSDSDFLKRELVSEYTKVVLKKRIEQSKNIVFVKTDNSLESHWVRFELDYSRELGKTLFCINLSDEAEGECNVLQFDVKNETISWTTGLVK</sequence>
<gene>
    <name evidence="6" type="primary">thsB2</name>
    <name evidence="8" type="ORF">FSZ17_06170</name>
</gene>